<proteinExistence type="inferred from homology"/>
<evidence type="ECO:0000250" key="1"/>
<evidence type="ECO:0000255" key="2"/>
<evidence type="ECO:0000256" key="3">
    <source>
        <dbReference type="SAM" id="MobiDB-lite"/>
    </source>
</evidence>
<evidence type="ECO:0000305" key="4"/>
<sequence length="609" mass="69327">MASAGDRRGGGGPPGSGDDSGGGWETVEKRVKKPAQQVGKGQWGQWNSPNAAPAPTAPWSGSGAFHHSGNTLVRHSDRRPARGTPRPPPQNRSTGAELQAPRGVVTAPLANGWQWGARSCPPGTESKEGGLPLSGCDPETDNAEGDDTSDDDNDDDMSDDLSDDYDSDASEKSFETRKNHKLFKGFFEVLDALSVEQLNEPTRQWHCPACKNGPGAIDWYKGLQPLMTHAKTKGSIKVKRHRELASLLEEELSRRGTSVVPSGEQFRKWKGLREGTDREIVWPPMVVVMNTVLEQDEDDKWKGMGNQELIDYFSEYAASKARHAYGPNGHRGMSVLIFDSSAVGYMEAERLHDHFVRQRTDRNTWNSAHKVTFLPGGKRQLYGFLATKDDMETFNRHCHGKSRLKYEMRSYNEMVVTQMKQMSEDNQQLNYLKNKMVKKEQHSKLVEDTLSVVTQKLRETMEENTIVRNKAKEKHLEYEKEMKYQEEFFHDQIEKIHKPTEEKEIKFEKLLQEERAKARQSDVDSGSTEDRRQRKEKIQNFIDCQVKDVEEFEAERDKLIKLHEEKKVKLKKEYLAKEFELEKELDTALTALMDKHKPDIFKSSTSPST</sequence>
<organism>
    <name type="scientific">Oryza sativa subsp. indica</name>
    <name type="common">Rice</name>
    <dbReference type="NCBI Taxonomy" id="39946"/>
    <lineage>
        <taxon>Eukaryota</taxon>
        <taxon>Viridiplantae</taxon>
        <taxon>Streptophyta</taxon>
        <taxon>Embryophyta</taxon>
        <taxon>Tracheophyta</taxon>
        <taxon>Spermatophyta</taxon>
        <taxon>Magnoliopsida</taxon>
        <taxon>Liliopsida</taxon>
        <taxon>Poales</taxon>
        <taxon>Poaceae</taxon>
        <taxon>BOP clade</taxon>
        <taxon>Oryzoideae</taxon>
        <taxon>Oryzeae</taxon>
        <taxon>Oryzinae</taxon>
        <taxon>Oryza</taxon>
        <taxon>Oryza sativa</taxon>
    </lineage>
</organism>
<gene>
    <name type="primary">SGS3</name>
    <name type="ORF">OsI_036510</name>
</gene>
<accession>A2ZIW7</accession>
<comment type="function">
    <text evidence="1">Required for post-transcriptional gene silencing and natural virus resistance.</text>
</comment>
<comment type="subcellular location">
    <subcellularLocation>
        <location evidence="1">Cytoplasm</location>
    </subcellularLocation>
</comment>
<comment type="similarity">
    <text evidence="4">Belongs to the SGS3 family.</text>
</comment>
<name>SGS3_ORYSI</name>
<protein>
    <recommendedName>
        <fullName>Protein SUPPRESSOR OF GENE SILENCING 3 homolog</fullName>
        <shortName>OsSGS3</shortName>
    </recommendedName>
</protein>
<dbReference type="EMBL" id="CM000137">
    <property type="protein sequence ID" value="EAY82551.1"/>
    <property type="molecule type" value="Genomic_DNA"/>
</dbReference>
<dbReference type="SMR" id="A2ZIW7"/>
<dbReference type="STRING" id="39946.A2ZIW7"/>
<dbReference type="EnsemblPlants" id="BGIOSGA036475-TA">
    <property type="protein sequence ID" value="BGIOSGA036475-PA"/>
    <property type="gene ID" value="BGIOSGA036475"/>
</dbReference>
<dbReference type="Gramene" id="BGIOSGA036475-TA">
    <property type="protein sequence ID" value="BGIOSGA036475-PA"/>
    <property type="gene ID" value="BGIOSGA036475"/>
</dbReference>
<dbReference type="HOGENOM" id="CLU_020338_1_0_1"/>
<dbReference type="OMA" id="DWYNLQP"/>
<dbReference type="Proteomes" id="UP000007015">
    <property type="component" value="Chromosome 12"/>
</dbReference>
<dbReference type="GO" id="GO:0005737">
    <property type="term" value="C:cytoplasm"/>
    <property type="evidence" value="ECO:0007669"/>
    <property type="project" value="UniProtKB-SubCell"/>
</dbReference>
<dbReference type="GO" id="GO:0051607">
    <property type="term" value="P:defense response to virus"/>
    <property type="evidence" value="ECO:0007669"/>
    <property type="project" value="InterPro"/>
</dbReference>
<dbReference type="GO" id="GO:0031047">
    <property type="term" value="P:regulatory ncRNA-mediated gene silencing"/>
    <property type="evidence" value="ECO:0007669"/>
    <property type="project" value="UniProtKB-KW"/>
</dbReference>
<dbReference type="CDD" id="cd12266">
    <property type="entry name" value="RRM_like_XS"/>
    <property type="match status" value="1"/>
</dbReference>
<dbReference type="Gene3D" id="3.30.70.2890">
    <property type="entry name" value="XS domain"/>
    <property type="match status" value="1"/>
</dbReference>
<dbReference type="InterPro" id="IPR044287">
    <property type="entry name" value="SGS3"/>
</dbReference>
<dbReference type="InterPro" id="IPR005380">
    <property type="entry name" value="XS_domain"/>
</dbReference>
<dbReference type="InterPro" id="IPR038588">
    <property type="entry name" value="XS_domain_sf"/>
</dbReference>
<dbReference type="InterPro" id="IPR005381">
    <property type="entry name" value="Znf-XS_domain"/>
</dbReference>
<dbReference type="PANTHER" id="PTHR46602">
    <property type="entry name" value="PROTEIN SUPPRESSOR OF GENE SILENCING 3"/>
    <property type="match status" value="1"/>
</dbReference>
<dbReference type="PANTHER" id="PTHR46602:SF1">
    <property type="entry name" value="PROTEIN SUPPRESSOR OF GENE SILENCING 3"/>
    <property type="match status" value="1"/>
</dbReference>
<dbReference type="Pfam" id="PF03468">
    <property type="entry name" value="XS"/>
    <property type="match status" value="1"/>
</dbReference>
<dbReference type="Pfam" id="PF03470">
    <property type="entry name" value="zf-XS"/>
    <property type="match status" value="1"/>
</dbReference>
<reference key="1">
    <citation type="journal article" date="2005" name="PLoS Biol.">
        <title>The genomes of Oryza sativa: a history of duplications.</title>
        <authorList>
            <person name="Yu J."/>
            <person name="Wang J."/>
            <person name="Lin W."/>
            <person name="Li S."/>
            <person name="Li H."/>
            <person name="Zhou J."/>
            <person name="Ni P."/>
            <person name="Dong W."/>
            <person name="Hu S."/>
            <person name="Zeng C."/>
            <person name="Zhang J."/>
            <person name="Zhang Y."/>
            <person name="Li R."/>
            <person name="Xu Z."/>
            <person name="Li S."/>
            <person name="Li X."/>
            <person name="Zheng H."/>
            <person name="Cong L."/>
            <person name="Lin L."/>
            <person name="Yin J."/>
            <person name="Geng J."/>
            <person name="Li G."/>
            <person name="Shi J."/>
            <person name="Liu J."/>
            <person name="Lv H."/>
            <person name="Li J."/>
            <person name="Wang J."/>
            <person name="Deng Y."/>
            <person name="Ran L."/>
            <person name="Shi X."/>
            <person name="Wang X."/>
            <person name="Wu Q."/>
            <person name="Li C."/>
            <person name="Ren X."/>
            <person name="Wang J."/>
            <person name="Wang X."/>
            <person name="Li D."/>
            <person name="Liu D."/>
            <person name="Zhang X."/>
            <person name="Ji Z."/>
            <person name="Zhao W."/>
            <person name="Sun Y."/>
            <person name="Zhang Z."/>
            <person name="Bao J."/>
            <person name="Han Y."/>
            <person name="Dong L."/>
            <person name="Ji J."/>
            <person name="Chen P."/>
            <person name="Wu S."/>
            <person name="Liu J."/>
            <person name="Xiao Y."/>
            <person name="Bu D."/>
            <person name="Tan J."/>
            <person name="Yang L."/>
            <person name="Ye C."/>
            <person name="Zhang J."/>
            <person name="Xu J."/>
            <person name="Zhou Y."/>
            <person name="Yu Y."/>
            <person name="Zhang B."/>
            <person name="Zhuang S."/>
            <person name="Wei H."/>
            <person name="Liu B."/>
            <person name="Lei M."/>
            <person name="Yu H."/>
            <person name="Li Y."/>
            <person name="Xu H."/>
            <person name="Wei S."/>
            <person name="He X."/>
            <person name="Fang L."/>
            <person name="Zhang Z."/>
            <person name="Zhang Y."/>
            <person name="Huang X."/>
            <person name="Su Z."/>
            <person name="Tong W."/>
            <person name="Li J."/>
            <person name="Tong Z."/>
            <person name="Li S."/>
            <person name="Ye J."/>
            <person name="Wang L."/>
            <person name="Fang L."/>
            <person name="Lei T."/>
            <person name="Chen C.-S."/>
            <person name="Chen H.-C."/>
            <person name="Xu Z."/>
            <person name="Li H."/>
            <person name="Huang H."/>
            <person name="Zhang F."/>
            <person name="Xu H."/>
            <person name="Li N."/>
            <person name="Zhao C."/>
            <person name="Li S."/>
            <person name="Dong L."/>
            <person name="Huang Y."/>
            <person name="Li L."/>
            <person name="Xi Y."/>
            <person name="Qi Q."/>
            <person name="Li W."/>
            <person name="Zhang B."/>
            <person name="Hu W."/>
            <person name="Zhang Y."/>
            <person name="Tian X."/>
            <person name="Jiao Y."/>
            <person name="Liang X."/>
            <person name="Jin J."/>
            <person name="Gao L."/>
            <person name="Zheng W."/>
            <person name="Hao B."/>
            <person name="Liu S.-M."/>
            <person name="Wang W."/>
            <person name="Yuan L."/>
            <person name="Cao M."/>
            <person name="McDermott J."/>
            <person name="Samudrala R."/>
            <person name="Wang J."/>
            <person name="Wong G.K.-S."/>
            <person name="Yang H."/>
        </authorList>
    </citation>
    <scope>NUCLEOTIDE SEQUENCE [LARGE SCALE GENOMIC DNA]</scope>
    <source>
        <strain>cv. 93-11</strain>
    </source>
</reference>
<keyword id="KW-0175">Coiled coil</keyword>
<keyword id="KW-0963">Cytoplasm</keyword>
<keyword id="KW-1185">Reference proteome</keyword>
<keyword id="KW-0943">RNA-mediated gene silencing</keyword>
<feature type="chain" id="PRO_0000333292" description="Protein SUPPRESSOR OF GENE SILENCING 3 homolog">
    <location>
        <begin position="1"/>
        <end position="609"/>
    </location>
</feature>
<feature type="region of interest" description="Disordered" evidence="3">
    <location>
        <begin position="1"/>
        <end position="174"/>
    </location>
</feature>
<feature type="coiled-coil region" evidence="2">
    <location>
        <begin position="420"/>
        <end position="473"/>
    </location>
</feature>
<feature type="coiled-coil region" evidence="2">
    <location>
        <begin position="545"/>
        <end position="584"/>
    </location>
</feature>
<feature type="compositionally biased region" description="Gly residues" evidence="3">
    <location>
        <begin position="10"/>
        <end position="24"/>
    </location>
</feature>
<feature type="compositionally biased region" description="Low complexity" evidence="3">
    <location>
        <begin position="49"/>
        <end position="58"/>
    </location>
</feature>
<feature type="compositionally biased region" description="Acidic residues" evidence="3">
    <location>
        <begin position="138"/>
        <end position="168"/>
    </location>
</feature>